<sequence length="123" mass="13541">MIQEQTMLNVADNSGARRVMCIKVLGGSHRRYAGVGDIIKITIKEAIPRGKVKKGDVLKAVVVRTKKGVRRPDGSVIRFDGNACVLLNNNSEQPIGTRIFGPVTRELRSEKFMKIISLAPEVL</sequence>
<protein>
    <recommendedName>
        <fullName evidence="1">Large ribosomal subunit protein uL14</fullName>
    </recommendedName>
    <alternativeName>
        <fullName evidence="2">50S ribosomal protein L14</fullName>
    </alternativeName>
</protein>
<reference key="1">
    <citation type="journal article" date="2009" name="PLoS Genet.">
        <title>Organised genome dynamics in the Escherichia coli species results in highly diverse adaptive paths.</title>
        <authorList>
            <person name="Touchon M."/>
            <person name="Hoede C."/>
            <person name="Tenaillon O."/>
            <person name="Barbe V."/>
            <person name="Baeriswyl S."/>
            <person name="Bidet P."/>
            <person name="Bingen E."/>
            <person name="Bonacorsi S."/>
            <person name="Bouchier C."/>
            <person name="Bouvet O."/>
            <person name="Calteau A."/>
            <person name="Chiapello H."/>
            <person name="Clermont O."/>
            <person name="Cruveiller S."/>
            <person name="Danchin A."/>
            <person name="Diard M."/>
            <person name="Dossat C."/>
            <person name="Karoui M.E."/>
            <person name="Frapy E."/>
            <person name="Garry L."/>
            <person name="Ghigo J.M."/>
            <person name="Gilles A.M."/>
            <person name="Johnson J."/>
            <person name="Le Bouguenec C."/>
            <person name="Lescat M."/>
            <person name="Mangenot S."/>
            <person name="Martinez-Jehanne V."/>
            <person name="Matic I."/>
            <person name="Nassif X."/>
            <person name="Oztas S."/>
            <person name="Petit M.A."/>
            <person name="Pichon C."/>
            <person name="Rouy Z."/>
            <person name="Ruf C.S."/>
            <person name="Schneider D."/>
            <person name="Tourret J."/>
            <person name="Vacherie B."/>
            <person name="Vallenet D."/>
            <person name="Medigue C."/>
            <person name="Rocha E.P.C."/>
            <person name="Denamur E."/>
        </authorList>
    </citation>
    <scope>NUCLEOTIDE SEQUENCE [LARGE SCALE GENOMIC DNA]</scope>
    <source>
        <strain>UMN026 / ExPEC</strain>
    </source>
</reference>
<evidence type="ECO:0000255" key="1">
    <source>
        <dbReference type="HAMAP-Rule" id="MF_01367"/>
    </source>
</evidence>
<evidence type="ECO:0000305" key="2"/>
<name>RL14_ECOLU</name>
<gene>
    <name evidence="1" type="primary">rplN</name>
    <name type="ordered locus">ECUMN_3783</name>
</gene>
<accession>B7NDT1</accession>
<dbReference type="EMBL" id="CU928163">
    <property type="protein sequence ID" value="CAR14931.1"/>
    <property type="molecule type" value="Genomic_DNA"/>
</dbReference>
<dbReference type="RefSeq" id="WP_000613955.1">
    <property type="nucleotide sequence ID" value="NC_011751.1"/>
</dbReference>
<dbReference type="RefSeq" id="YP_002414436.1">
    <property type="nucleotide sequence ID" value="NC_011751.1"/>
</dbReference>
<dbReference type="SMR" id="B7NDT1"/>
<dbReference type="STRING" id="585056.ECUMN_3783"/>
<dbReference type="GeneID" id="93778677"/>
<dbReference type="KEGG" id="eum:ECUMN_3783"/>
<dbReference type="PATRIC" id="fig|585056.7.peg.3958"/>
<dbReference type="HOGENOM" id="CLU_095071_2_1_6"/>
<dbReference type="Proteomes" id="UP000007097">
    <property type="component" value="Chromosome"/>
</dbReference>
<dbReference type="GO" id="GO:0022625">
    <property type="term" value="C:cytosolic large ribosomal subunit"/>
    <property type="evidence" value="ECO:0007669"/>
    <property type="project" value="TreeGrafter"/>
</dbReference>
<dbReference type="GO" id="GO:0070180">
    <property type="term" value="F:large ribosomal subunit rRNA binding"/>
    <property type="evidence" value="ECO:0007669"/>
    <property type="project" value="TreeGrafter"/>
</dbReference>
<dbReference type="GO" id="GO:0003735">
    <property type="term" value="F:structural constituent of ribosome"/>
    <property type="evidence" value="ECO:0007669"/>
    <property type="project" value="InterPro"/>
</dbReference>
<dbReference type="GO" id="GO:0006412">
    <property type="term" value="P:translation"/>
    <property type="evidence" value="ECO:0007669"/>
    <property type="project" value="UniProtKB-UniRule"/>
</dbReference>
<dbReference type="CDD" id="cd00337">
    <property type="entry name" value="Ribosomal_uL14"/>
    <property type="match status" value="1"/>
</dbReference>
<dbReference type="FunFam" id="2.40.150.20:FF:000001">
    <property type="entry name" value="50S ribosomal protein L14"/>
    <property type="match status" value="1"/>
</dbReference>
<dbReference type="Gene3D" id="2.40.150.20">
    <property type="entry name" value="Ribosomal protein L14"/>
    <property type="match status" value="1"/>
</dbReference>
<dbReference type="HAMAP" id="MF_01367">
    <property type="entry name" value="Ribosomal_uL14"/>
    <property type="match status" value="1"/>
</dbReference>
<dbReference type="InterPro" id="IPR000218">
    <property type="entry name" value="Ribosomal_uL14"/>
</dbReference>
<dbReference type="InterPro" id="IPR005745">
    <property type="entry name" value="Ribosomal_uL14_bac-type"/>
</dbReference>
<dbReference type="InterPro" id="IPR019972">
    <property type="entry name" value="Ribosomal_uL14_CS"/>
</dbReference>
<dbReference type="InterPro" id="IPR036853">
    <property type="entry name" value="Ribosomal_uL14_sf"/>
</dbReference>
<dbReference type="NCBIfam" id="TIGR01067">
    <property type="entry name" value="rplN_bact"/>
    <property type="match status" value="1"/>
</dbReference>
<dbReference type="PANTHER" id="PTHR11761">
    <property type="entry name" value="50S/60S RIBOSOMAL PROTEIN L14/L23"/>
    <property type="match status" value="1"/>
</dbReference>
<dbReference type="PANTHER" id="PTHR11761:SF3">
    <property type="entry name" value="LARGE RIBOSOMAL SUBUNIT PROTEIN UL14M"/>
    <property type="match status" value="1"/>
</dbReference>
<dbReference type="Pfam" id="PF00238">
    <property type="entry name" value="Ribosomal_L14"/>
    <property type="match status" value="1"/>
</dbReference>
<dbReference type="SMART" id="SM01374">
    <property type="entry name" value="Ribosomal_L14"/>
    <property type="match status" value="1"/>
</dbReference>
<dbReference type="SUPFAM" id="SSF50193">
    <property type="entry name" value="Ribosomal protein L14"/>
    <property type="match status" value="1"/>
</dbReference>
<dbReference type="PROSITE" id="PS00049">
    <property type="entry name" value="RIBOSOMAL_L14"/>
    <property type="match status" value="1"/>
</dbReference>
<comment type="function">
    <text evidence="1">Binds to 23S rRNA. Forms part of two intersubunit bridges in the 70S ribosome.</text>
</comment>
<comment type="subunit">
    <text evidence="1">Part of the 50S ribosomal subunit. Forms a cluster with proteins L3 and L19. In the 70S ribosome, L14 and L19 interact and together make contacts with the 16S rRNA in bridges B5 and B8.</text>
</comment>
<comment type="similarity">
    <text evidence="1">Belongs to the universal ribosomal protein uL14 family.</text>
</comment>
<keyword id="KW-0687">Ribonucleoprotein</keyword>
<keyword id="KW-0689">Ribosomal protein</keyword>
<keyword id="KW-0694">RNA-binding</keyword>
<keyword id="KW-0699">rRNA-binding</keyword>
<organism>
    <name type="scientific">Escherichia coli O17:K52:H18 (strain UMN026 / ExPEC)</name>
    <dbReference type="NCBI Taxonomy" id="585056"/>
    <lineage>
        <taxon>Bacteria</taxon>
        <taxon>Pseudomonadati</taxon>
        <taxon>Pseudomonadota</taxon>
        <taxon>Gammaproteobacteria</taxon>
        <taxon>Enterobacterales</taxon>
        <taxon>Enterobacteriaceae</taxon>
        <taxon>Escherichia</taxon>
    </lineage>
</organism>
<feature type="chain" id="PRO_1000144267" description="Large ribosomal subunit protein uL14">
    <location>
        <begin position="1"/>
        <end position="123"/>
    </location>
</feature>
<proteinExistence type="inferred from homology"/>